<dbReference type="EMBL" id="AL111168">
    <property type="protein sequence ID" value="CAL34847.1"/>
    <property type="molecule type" value="Genomic_DNA"/>
</dbReference>
<dbReference type="PIR" id="A81342">
    <property type="entry name" value="A81342"/>
</dbReference>
<dbReference type="RefSeq" id="WP_002852274.1">
    <property type="nucleotide sequence ID" value="NZ_SZUC01000002.1"/>
</dbReference>
<dbReference type="RefSeq" id="YP_002344128.1">
    <property type="nucleotide sequence ID" value="NC_002163.1"/>
</dbReference>
<dbReference type="SMR" id="Q9PPJ7"/>
<dbReference type="IntAct" id="Q9PPJ7">
    <property type="interactions" value="4"/>
</dbReference>
<dbReference type="STRING" id="192222.Cj0710"/>
<dbReference type="PaxDb" id="192222-Cj0710"/>
<dbReference type="EnsemblBacteria" id="CAL34847">
    <property type="protein sequence ID" value="CAL34847"/>
    <property type="gene ID" value="Cj0710"/>
</dbReference>
<dbReference type="GeneID" id="905030"/>
<dbReference type="KEGG" id="cje:Cj0710"/>
<dbReference type="PATRIC" id="fig|192222.6.peg.702"/>
<dbReference type="eggNOG" id="COG0228">
    <property type="taxonomic scope" value="Bacteria"/>
</dbReference>
<dbReference type="HOGENOM" id="CLU_100590_5_1_7"/>
<dbReference type="OrthoDB" id="9807878at2"/>
<dbReference type="Proteomes" id="UP000000799">
    <property type="component" value="Chromosome"/>
</dbReference>
<dbReference type="GO" id="GO:0005737">
    <property type="term" value="C:cytoplasm"/>
    <property type="evidence" value="ECO:0007669"/>
    <property type="project" value="UniProtKB-ARBA"/>
</dbReference>
<dbReference type="GO" id="GO:0015935">
    <property type="term" value="C:small ribosomal subunit"/>
    <property type="evidence" value="ECO:0007669"/>
    <property type="project" value="TreeGrafter"/>
</dbReference>
<dbReference type="GO" id="GO:0003735">
    <property type="term" value="F:structural constituent of ribosome"/>
    <property type="evidence" value="ECO:0007669"/>
    <property type="project" value="InterPro"/>
</dbReference>
<dbReference type="GO" id="GO:0006412">
    <property type="term" value="P:translation"/>
    <property type="evidence" value="ECO:0007669"/>
    <property type="project" value="UniProtKB-UniRule"/>
</dbReference>
<dbReference type="FunFam" id="3.30.1320.10:FF:000005">
    <property type="entry name" value="30S ribosomal protein S16"/>
    <property type="match status" value="1"/>
</dbReference>
<dbReference type="Gene3D" id="3.30.1320.10">
    <property type="match status" value="1"/>
</dbReference>
<dbReference type="HAMAP" id="MF_00385">
    <property type="entry name" value="Ribosomal_bS16"/>
    <property type="match status" value="1"/>
</dbReference>
<dbReference type="InterPro" id="IPR000307">
    <property type="entry name" value="Ribosomal_bS16"/>
</dbReference>
<dbReference type="InterPro" id="IPR020592">
    <property type="entry name" value="Ribosomal_bS16_CS"/>
</dbReference>
<dbReference type="InterPro" id="IPR023803">
    <property type="entry name" value="Ribosomal_bS16_dom_sf"/>
</dbReference>
<dbReference type="NCBIfam" id="TIGR00002">
    <property type="entry name" value="S16"/>
    <property type="match status" value="1"/>
</dbReference>
<dbReference type="PANTHER" id="PTHR12919">
    <property type="entry name" value="30S RIBOSOMAL PROTEIN S16"/>
    <property type="match status" value="1"/>
</dbReference>
<dbReference type="PANTHER" id="PTHR12919:SF20">
    <property type="entry name" value="SMALL RIBOSOMAL SUBUNIT PROTEIN BS16M"/>
    <property type="match status" value="1"/>
</dbReference>
<dbReference type="Pfam" id="PF00886">
    <property type="entry name" value="Ribosomal_S16"/>
    <property type="match status" value="1"/>
</dbReference>
<dbReference type="SUPFAM" id="SSF54565">
    <property type="entry name" value="Ribosomal protein S16"/>
    <property type="match status" value="1"/>
</dbReference>
<dbReference type="PROSITE" id="PS00732">
    <property type="entry name" value="RIBOSOMAL_S16"/>
    <property type="match status" value="1"/>
</dbReference>
<comment type="similarity">
    <text evidence="1">Belongs to the bacterial ribosomal protein bS16 family.</text>
</comment>
<sequence length="75" mass="8678">MTVIRLTRMGRTKRPFYRIVVTDSRKRRDGGWIESIGYYNPMVEPEVIKVDAERLAYWKSVGAKLSDKVASITSK</sequence>
<keyword id="KW-1185">Reference proteome</keyword>
<keyword id="KW-0687">Ribonucleoprotein</keyword>
<keyword id="KW-0689">Ribosomal protein</keyword>
<protein>
    <recommendedName>
        <fullName evidence="1">Small ribosomal subunit protein bS16</fullName>
    </recommendedName>
    <alternativeName>
        <fullName evidence="2">30S ribosomal protein S16</fullName>
    </alternativeName>
</protein>
<gene>
    <name evidence="1" type="primary">rpsP</name>
    <name type="ordered locus">Cj0710</name>
</gene>
<feature type="chain" id="PRO_0000167166" description="Small ribosomal subunit protein bS16">
    <location>
        <begin position="1"/>
        <end position="75"/>
    </location>
</feature>
<reference key="1">
    <citation type="journal article" date="2000" name="Nature">
        <title>The genome sequence of the food-borne pathogen Campylobacter jejuni reveals hypervariable sequences.</title>
        <authorList>
            <person name="Parkhill J."/>
            <person name="Wren B.W."/>
            <person name="Mungall K.L."/>
            <person name="Ketley J.M."/>
            <person name="Churcher C.M."/>
            <person name="Basham D."/>
            <person name="Chillingworth T."/>
            <person name="Davies R.M."/>
            <person name="Feltwell T."/>
            <person name="Holroyd S."/>
            <person name="Jagels K."/>
            <person name="Karlyshev A.V."/>
            <person name="Moule S."/>
            <person name="Pallen M.J."/>
            <person name="Penn C.W."/>
            <person name="Quail M.A."/>
            <person name="Rajandream M.A."/>
            <person name="Rutherford K.M."/>
            <person name="van Vliet A.H.M."/>
            <person name="Whitehead S."/>
            <person name="Barrell B.G."/>
        </authorList>
    </citation>
    <scope>NUCLEOTIDE SEQUENCE [LARGE SCALE GENOMIC DNA]</scope>
    <source>
        <strain>ATCC 700819 / NCTC 11168</strain>
    </source>
</reference>
<proteinExistence type="inferred from homology"/>
<organism>
    <name type="scientific">Campylobacter jejuni subsp. jejuni serotype O:2 (strain ATCC 700819 / NCTC 11168)</name>
    <dbReference type="NCBI Taxonomy" id="192222"/>
    <lineage>
        <taxon>Bacteria</taxon>
        <taxon>Pseudomonadati</taxon>
        <taxon>Campylobacterota</taxon>
        <taxon>Epsilonproteobacteria</taxon>
        <taxon>Campylobacterales</taxon>
        <taxon>Campylobacteraceae</taxon>
        <taxon>Campylobacter</taxon>
    </lineage>
</organism>
<name>RS16_CAMJE</name>
<accession>Q9PPJ7</accession>
<accession>Q0PAG9</accession>
<evidence type="ECO:0000255" key="1">
    <source>
        <dbReference type="HAMAP-Rule" id="MF_00385"/>
    </source>
</evidence>
<evidence type="ECO:0000305" key="2"/>